<evidence type="ECO:0000255" key="1">
    <source>
        <dbReference type="HAMAP-Rule" id="MF_00478"/>
    </source>
</evidence>
<sequence length="233" mass="24635">MSEAKNLLAQGLWKNNSALVQLLGLCPLLAVSSTATNALGLGLATTLVLVCTNTAVSALRRWVPSEIRIPIYVMIIASVVSTVQMLINAYAFGLYQSLGIFIPLIVTNCIVIGRAEAYAAKNPVGLSALDGFAMGMGATCALFVLGALREILGNGTLFDGADMLLGSWATVLRIDILHLDTPFLLAMLPPGAFIGLGLLLAGKYVIDEKMKARKANTRVSVPQLQDGYAEKAL</sequence>
<comment type="function">
    <text evidence="1">Part of a membrane-bound complex that couples electron transfer with translocation of ions across the membrane.</text>
</comment>
<comment type="subunit">
    <text evidence="1">The complex is composed of six subunits: RnfA, RnfB, RnfC, RnfD, RnfE and RnfG.</text>
</comment>
<comment type="subcellular location">
    <subcellularLocation>
        <location evidence="1">Cell inner membrane</location>
        <topology evidence="1">Multi-pass membrane protein</topology>
    </subcellularLocation>
</comment>
<comment type="similarity">
    <text evidence="1">Belongs to the NqrDE/RnfAE family.</text>
</comment>
<keyword id="KW-0997">Cell inner membrane</keyword>
<keyword id="KW-1003">Cell membrane</keyword>
<keyword id="KW-0249">Electron transport</keyword>
<keyword id="KW-0472">Membrane</keyword>
<keyword id="KW-1278">Translocase</keyword>
<keyword id="KW-0812">Transmembrane</keyword>
<keyword id="KW-1133">Transmembrane helix</keyword>
<keyword id="KW-0813">Transport</keyword>
<proteinExistence type="inferred from homology"/>
<name>RNFE_YERPG</name>
<gene>
    <name evidence="1" type="primary">rnfE</name>
    <name type="ordered locus">YpAngola_A2248</name>
</gene>
<organism>
    <name type="scientific">Yersinia pestis bv. Antiqua (strain Angola)</name>
    <dbReference type="NCBI Taxonomy" id="349746"/>
    <lineage>
        <taxon>Bacteria</taxon>
        <taxon>Pseudomonadati</taxon>
        <taxon>Pseudomonadota</taxon>
        <taxon>Gammaproteobacteria</taxon>
        <taxon>Enterobacterales</taxon>
        <taxon>Yersiniaceae</taxon>
        <taxon>Yersinia</taxon>
    </lineage>
</organism>
<protein>
    <recommendedName>
        <fullName evidence="1">Ion-translocating oxidoreductase complex subunit E</fullName>
        <ecNumber evidence="1">7.-.-.-</ecNumber>
    </recommendedName>
    <alternativeName>
        <fullName evidence="1">Rnf electron transport complex subunit E</fullName>
    </alternativeName>
</protein>
<feature type="chain" id="PRO_1000125870" description="Ion-translocating oxidoreductase complex subunit E">
    <location>
        <begin position="1"/>
        <end position="233"/>
    </location>
</feature>
<feature type="transmembrane region" description="Helical" evidence="1">
    <location>
        <begin position="18"/>
        <end position="38"/>
    </location>
</feature>
<feature type="transmembrane region" description="Helical" evidence="1">
    <location>
        <begin position="39"/>
        <end position="59"/>
    </location>
</feature>
<feature type="transmembrane region" description="Helical" evidence="1">
    <location>
        <begin position="69"/>
        <end position="89"/>
    </location>
</feature>
<feature type="transmembrane region" description="Helical" evidence="1">
    <location>
        <begin position="92"/>
        <end position="112"/>
    </location>
</feature>
<feature type="transmembrane region" description="Helical" evidence="1">
    <location>
        <begin position="128"/>
        <end position="148"/>
    </location>
</feature>
<feature type="transmembrane region" description="Helical" evidence="1">
    <location>
        <begin position="182"/>
        <end position="202"/>
    </location>
</feature>
<accession>A9R8U3</accession>
<reference key="1">
    <citation type="journal article" date="2010" name="J. Bacteriol.">
        <title>Genome sequence of the deep-rooted Yersinia pestis strain Angola reveals new insights into the evolution and pangenome of the plague bacterium.</title>
        <authorList>
            <person name="Eppinger M."/>
            <person name="Worsham P.L."/>
            <person name="Nikolich M.P."/>
            <person name="Riley D.R."/>
            <person name="Sebastian Y."/>
            <person name="Mou S."/>
            <person name="Achtman M."/>
            <person name="Lindler L.E."/>
            <person name="Ravel J."/>
        </authorList>
    </citation>
    <scope>NUCLEOTIDE SEQUENCE [LARGE SCALE GENOMIC DNA]</scope>
    <source>
        <strain>Angola</strain>
    </source>
</reference>
<dbReference type="EC" id="7.-.-.-" evidence="1"/>
<dbReference type="EMBL" id="CP000901">
    <property type="protein sequence ID" value="ABX85953.1"/>
    <property type="molecule type" value="Genomic_DNA"/>
</dbReference>
<dbReference type="RefSeq" id="WP_012229617.1">
    <property type="nucleotide sequence ID" value="NC_010159.1"/>
</dbReference>
<dbReference type="SMR" id="A9R8U3"/>
<dbReference type="KEGG" id="ypg:YpAngola_A2248"/>
<dbReference type="PATRIC" id="fig|349746.12.peg.3252"/>
<dbReference type="GO" id="GO:0005886">
    <property type="term" value="C:plasma membrane"/>
    <property type="evidence" value="ECO:0007669"/>
    <property type="project" value="UniProtKB-SubCell"/>
</dbReference>
<dbReference type="GO" id="GO:0022900">
    <property type="term" value="P:electron transport chain"/>
    <property type="evidence" value="ECO:0007669"/>
    <property type="project" value="UniProtKB-UniRule"/>
</dbReference>
<dbReference type="HAMAP" id="MF_00478">
    <property type="entry name" value="RsxE_RnfE"/>
    <property type="match status" value="1"/>
</dbReference>
<dbReference type="InterPro" id="IPR003667">
    <property type="entry name" value="NqrDE/RnfAE"/>
</dbReference>
<dbReference type="InterPro" id="IPR010968">
    <property type="entry name" value="RnfE"/>
</dbReference>
<dbReference type="NCBIfam" id="NF009070">
    <property type="entry name" value="PRK12405.1"/>
    <property type="match status" value="1"/>
</dbReference>
<dbReference type="NCBIfam" id="TIGR01948">
    <property type="entry name" value="rnfE"/>
    <property type="match status" value="1"/>
</dbReference>
<dbReference type="PANTHER" id="PTHR30586">
    <property type="entry name" value="ELECTRON TRANSPORT COMPLEX PROTEIN RNFE"/>
    <property type="match status" value="1"/>
</dbReference>
<dbReference type="PANTHER" id="PTHR30586:SF0">
    <property type="entry name" value="ION-TRANSLOCATING OXIDOREDUCTASE COMPLEX SUBUNIT E"/>
    <property type="match status" value="1"/>
</dbReference>
<dbReference type="Pfam" id="PF02508">
    <property type="entry name" value="Rnf-Nqr"/>
    <property type="match status" value="1"/>
</dbReference>
<dbReference type="PIRSF" id="PIRSF006102">
    <property type="entry name" value="NQR_DE"/>
    <property type="match status" value="1"/>
</dbReference>